<accession>A5GW15</accession>
<comment type="function">
    <text evidence="1">Involved in the binding of tRNA to the ribosomes.</text>
</comment>
<comment type="subunit">
    <text evidence="1">Part of the 30S ribosomal subunit.</text>
</comment>
<comment type="similarity">
    <text evidence="1">Belongs to the universal ribosomal protein uS10 family.</text>
</comment>
<reference key="1">
    <citation type="submission" date="2006-05" db="EMBL/GenBank/DDBJ databases">
        <authorList>
            <consortium name="Genoscope"/>
        </authorList>
    </citation>
    <scope>NUCLEOTIDE SEQUENCE [LARGE SCALE GENOMIC DNA]</scope>
    <source>
        <strain>RCC307</strain>
    </source>
</reference>
<organism>
    <name type="scientific">Synechococcus sp. (strain RCC307)</name>
    <dbReference type="NCBI Taxonomy" id="316278"/>
    <lineage>
        <taxon>Bacteria</taxon>
        <taxon>Bacillati</taxon>
        <taxon>Cyanobacteriota</taxon>
        <taxon>Cyanophyceae</taxon>
        <taxon>Synechococcales</taxon>
        <taxon>Synechococcaceae</taxon>
        <taxon>Synechococcus</taxon>
    </lineage>
</organism>
<keyword id="KW-1185">Reference proteome</keyword>
<keyword id="KW-0687">Ribonucleoprotein</keyword>
<keyword id="KW-0689">Ribosomal protein</keyword>
<dbReference type="EMBL" id="CT978603">
    <property type="protein sequence ID" value="CAK29074.1"/>
    <property type="molecule type" value="Genomic_DNA"/>
</dbReference>
<dbReference type="SMR" id="A5GW15"/>
<dbReference type="STRING" id="316278.SynRCC307_2171"/>
<dbReference type="KEGG" id="syr:SynRCC307_2171"/>
<dbReference type="eggNOG" id="COG0051">
    <property type="taxonomic scope" value="Bacteria"/>
</dbReference>
<dbReference type="HOGENOM" id="CLU_122625_1_3_3"/>
<dbReference type="OrthoDB" id="9804464at2"/>
<dbReference type="Proteomes" id="UP000001115">
    <property type="component" value="Chromosome"/>
</dbReference>
<dbReference type="GO" id="GO:1990904">
    <property type="term" value="C:ribonucleoprotein complex"/>
    <property type="evidence" value="ECO:0007669"/>
    <property type="project" value="UniProtKB-KW"/>
</dbReference>
<dbReference type="GO" id="GO:0005840">
    <property type="term" value="C:ribosome"/>
    <property type="evidence" value="ECO:0007669"/>
    <property type="project" value="UniProtKB-KW"/>
</dbReference>
<dbReference type="GO" id="GO:0003735">
    <property type="term" value="F:structural constituent of ribosome"/>
    <property type="evidence" value="ECO:0007669"/>
    <property type="project" value="InterPro"/>
</dbReference>
<dbReference type="GO" id="GO:0000049">
    <property type="term" value="F:tRNA binding"/>
    <property type="evidence" value="ECO:0007669"/>
    <property type="project" value="UniProtKB-UniRule"/>
</dbReference>
<dbReference type="GO" id="GO:0006412">
    <property type="term" value="P:translation"/>
    <property type="evidence" value="ECO:0007669"/>
    <property type="project" value="UniProtKB-UniRule"/>
</dbReference>
<dbReference type="FunFam" id="3.30.70.600:FF:000001">
    <property type="entry name" value="30S ribosomal protein S10"/>
    <property type="match status" value="1"/>
</dbReference>
<dbReference type="Gene3D" id="3.30.70.600">
    <property type="entry name" value="Ribosomal protein S10 domain"/>
    <property type="match status" value="1"/>
</dbReference>
<dbReference type="HAMAP" id="MF_00508">
    <property type="entry name" value="Ribosomal_uS10"/>
    <property type="match status" value="1"/>
</dbReference>
<dbReference type="InterPro" id="IPR001848">
    <property type="entry name" value="Ribosomal_uS10"/>
</dbReference>
<dbReference type="InterPro" id="IPR027486">
    <property type="entry name" value="Ribosomal_uS10_dom"/>
</dbReference>
<dbReference type="InterPro" id="IPR036838">
    <property type="entry name" value="Ribosomal_uS10_dom_sf"/>
</dbReference>
<dbReference type="NCBIfam" id="NF001861">
    <property type="entry name" value="PRK00596.1"/>
    <property type="match status" value="1"/>
</dbReference>
<dbReference type="NCBIfam" id="TIGR01049">
    <property type="entry name" value="rpsJ_bact"/>
    <property type="match status" value="1"/>
</dbReference>
<dbReference type="PANTHER" id="PTHR11700">
    <property type="entry name" value="30S RIBOSOMAL PROTEIN S10 FAMILY MEMBER"/>
    <property type="match status" value="1"/>
</dbReference>
<dbReference type="Pfam" id="PF00338">
    <property type="entry name" value="Ribosomal_S10"/>
    <property type="match status" value="1"/>
</dbReference>
<dbReference type="PRINTS" id="PR00971">
    <property type="entry name" value="RIBOSOMALS10"/>
</dbReference>
<dbReference type="SMART" id="SM01403">
    <property type="entry name" value="Ribosomal_S10"/>
    <property type="match status" value="1"/>
</dbReference>
<dbReference type="SUPFAM" id="SSF54999">
    <property type="entry name" value="Ribosomal protein S10"/>
    <property type="match status" value="1"/>
</dbReference>
<gene>
    <name evidence="1" type="primary">rpsJ</name>
    <name evidence="1" type="synonym">rps10</name>
    <name type="ordered locus">SynRCC307_2171</name>
</gene>
<feature type="chain" id="PRO_1000015128" description="Small ribosomal subunit protein uS10">
    <location>
        <begin position="1"/>
        <end position="106"/>
    </location>
</feature>
<name>RS10_SYNR3</name>
<evidence type="ECO:0000255" key="1">
    <source>
        <dbReference type="HAMAP-Rule" id="MF_00508"/>
    </source>
</evidence>
<evidence type="ECO:0000305" key="2"/>
<sequence length="106" mass="12094">MSTAIAQQKIRIRLKAFDRRMLDLSCDKIIETADHTAATAIGPIPLPTKRKIYCVLRSPHVDKDSREHFETRTHRRLIDIFNPSSKTIDALMKLDLPSGVDIEVKL</sequence>
<proteinExistence type="inferred from homology"/>
<protein>
    <recommendedName>
        <fullName evidence="1">Small ribosomal subunit protein uS10</fullName>
    </recommendedName>
    <alternativeName>
        <fullName evidence="2">30S ribosomal protein S10</fullName>
    </alternativeName>
</protein>